<gene>
    <name type="primary">TAS2R8</name>
</gene>
<dbReference type="EMBL" id="AY724872">
    <property type="protein sequence ID" value="AAU21094.1"/>
    <property type="molecule type" value="Genomic_DNA"/>
</dbReference>
<dbReference type="FunCoup" id="Q646C5">
    <property type="interactions" value="192"/>
</dbReference>
<dbReference type="STRING" id="9598.ENSPTRP00000008012"/>
<dbReference type="GlyCosmos" id="Q646C5">
    <property type="glycosylation" value="1 site, No reported glycans"/>
</dbReference>
<dbReference type="PaxDb" id="9598-ENSPTRP00000008012"/>
<dbReference type="eggNOG" id="ENOG502SKRK">
    <property type="taxonomic scope" value="Eukaryota"/>
</dbReference>
<dbReference type="InParanoid" id="Q646C5"/>
<dbReference type="Proteomes" id="UP000002277">
    <property type="component" value="Unplaced"/>
</dbReference>
<dbReference type="GO" id="GO:0016020">
    <property type="term" value="C:membrane"/>
    <property type="evidence" value="ECO:0000318"/>
    <property type="project" value="GO_Central"/>
</dbReference>
<dbReference type="GO" id="GO:0005886">
    <property type="term" value="C:plasma membrane"/>
    <property type="evidence" value="ECO:0007669"/>
    <property type="project" value="UniProtKB-ARBA"/>
</dbReference>
<dbReference type="GO" id="GO:0033038">
    <property type="term" value="F:bitter taste receptor activity"/>
    <property type="evidence" value="ECO:0000318"/>
    <property type="project" value="GO_Central"/>
</dbReference>
<dbReference type="GO" id="GO:0004930">
    <property type="term" value="F:G protein-coupled receptor activity"/>
    <property type="evidence" value="ECO:0007669"/>
    <property type="project" value="UniProtKB-KW"/>
</dbReference>
<dbReference type="GO" id="GO:0001580">
    <property type="term" value="P:detection of chemical stimulus involved in sensory perception of bitter taste"/>
    <property type="evidence" value="ECO:0000318"/>
    <property type="project" value="GO_Central"/>
</dbReference>
<dbReference type="CDD" id="cd15022">
    <property type="entry name" value="7tm_TAS2R8"/>
    <property type="match status" value="1"/>
</dbReference>
<dbReference type="FunFam" id="1.20.1070.10:FF:000042">
    <property type="entry name" value="Taste receptor type 2 member 7"/>
    <property type="match status" value="1"/>
</dbReference>
<dbReference type="Gene3D" id="1.20.1070.10">
    <property type="entry name" value="Rhodopsin 7-helix transmembrane proteins"/>
    <property type="match status" value="1"/>
</dbReference>
<dbReference type="InterPro" id="IPR017452">
    <property type="entry name" value="GPCR_Rhodpsn_7TM"/>
</dbReference>
<dbReference type="InterPro" id="IPR007960">
    <property type="entry name" value="TAS2R"/>
</dbReference>
<dbReference type="PANTHER" id="PTHR11394">
    <property type="entry name" value="TASTE RECEPTOR TYPE 2"/>
    <property type="match status" value="1"/>
</dbReference>
<dbReference type="PANTHER" id="PTHR11394:SF31">
    <property type="entry name" value="TASTE RECEPTOR TYPE 2 MEMBER 8"/>
    <property type="match status" value="1"/>
</dbReference>
<dbReference type="Pfam" id="PF05296">
    <property type="entry name" value="TAS2R"/>
    <property type="match status" value="1"/>
</dbReference>
<dbReference type="SUPFAM" id="SSF81321">
    <property type="entry name" value="Family A G protein-coupled receptor-like"/>
    <property type="match status" value="1"/>
</dbReference>
<dbReference type="PROSITE" id="PS50262">
    <property type="entry name" value="G_PROTEIN_RECEP_F1_2"/>
    <property type="match status" value="1"/>
</dbReference>
<comment type="function">
    <text evidence="1">Receptor that may play a role in the perception of bitterness and is gustducin-linked. May play a role in sensing the chemical composition of the gastrointestinal content. The activity of this receptor may stimulate alpha gustducin, mediate PLC-beta-2 activation and lead to the gating of TRPM5 (By similarity).</text>
</comment>
<comment type="subcellular location">
    <subcellularLocation>
        <location>Membrane</location>
        <topology>Multi-pass membrane protein</topology>
    </subcellularLocation>
</comment>
<comment type="miscellaneous">
    <text>Most taste cells may be activated by a limited number of bitter compounds; individual taste cells can discriminate among bitter stimuli.</text>
</comment>
<comment type="similarity">
    <text evidence="3">Belongs to the G-protein coupled receptor T2R family.</text>
</comment>
<feature type="chain" id="PRO_0000082229" description="Taste receptor type 2 member 8">
    <location>
        <begin position="1"/>
        <end position="309"/>
    </location>
</feature>
<feature type="topological domain" description="Extracellular" evidence="2">
    <location>
        <begin position="1"/>
        <end position="7"/>
    </location>
</feature>
<feature type="transmembrane region" description="Helical; Name=1" evidence="2">
    <location>
        <begin position="8"/>
        <end position="28"/>
    </location>
</feature>
<feature type="topological domain" description="Cytoplasmic" evidence="2">
    <location>
        <begin position="29"/>
        <end position="50"/>
    </location>
</feature>
<feature type="transmembrane region" description="Helical; Name=2" evidence="2">
    <location>
        <begin position="51"/>
        <end position="71"/>
    </location>
</feature>
<feature type="topological domain" description="Extracellular" evidence="2">
    <location>
        <begin position="72"/>
        <end position="82"/>
    </location>
</feature>
<feature type="transmembrane region" description="Helical; Name=3" evidence="2">
    <location>
        <begin position="83"/>
        <end position="103"/>
    </location>
</feature>
<feature type="topological domain" description="Cytoplasmic" evidence="2">
    <location>
        <begin position="104"/>
        <end position="131"/>
    </location>
</feature>
<feature type="transmembrane region" description="Helical; Name=4" evidence="2">
    <location>
        <begin position="132"/>
        <end position="152"/>
    </location>
</feature>
<feature type="topological domain" description="Extracellular" evidence="2">
    <location>
        <begin position="153"/>
        <end position="184"/>
    </location>
</feature>
<feature type="transmembrane region" description="Helical; Name=5" evidence="2">
    <location>
        <begin position="185"/>
        <end position="205"/>
    </location>
</feature>
<feature type="topological domain" description="Cytoplasmic" evidence="2">
    <location>
        <begin position="206"/>
        <end position="239"/>
    </location>
</feature>
<feature type="transmembrane region" description="Helical; Name=6" evidence="2">
    <location>
        <begin position="240"/>
        <end position="260"/>
    </location>
</feature>
<feature type="topological domain" description="Extracellular" evidence="2">
    <location>
        <begin position="261"/>
        <end position="266"/>
    </location>
</feature>
<feature type="transmembrane region" description="Helical; Name=7" evidence="2">
    <location>
        <begin position="267"/>
        <end position="287"/>
    </location>
</feature>
<feature type="topological domain" description="Cytoplasmic" evidence="2">
    <location>
        <begin position="288"/>
        <end position="309"/>
    </location>
</feature>
<feature type="glycosylation site" description="N-linked (GlcNAc...) asparagine" evidence="2">
    <location>
        <position position="167"/>
    </location>
</feature>
<keyword id="KW-0297">G-protein coupled receptor</keyword>
<keyword id="KW-0325">Glycoprotein</keyword>
<keyword id="KW-0472">Membrane</keyword>
<keyword id="KW-0675">Receptor</keyword>
<keyword id="KW-1185">Reference proteome</keyword>
<keyword id="KW-0716">Sensory transduction</keyword>
<keyword id="KW-0919">Taste</keyword>
<keyword id="KW-0807">Transducer</keyword>
<keyword id="KW-0812">Transmembrane</keyword>
<keyword id="KW-1133">Transmembrane helix</keyword>
<proteinExistence type="inferred from homology"/>
<evidence type="ECO:0000250" key="1"/>
<evidence type="ECO:0000255" key="2"/>
<evidence type="ECO:0000305" key="3"/>
<sequence>MFSPADNIFIILITGEFILGILGNGYIALVNWIDWIKKKKISTVDYILTNLVIARICLISVMVVNGIVIVLNPDVYTKNKQQIVIFTFWTFANYLNMWITTCLNVFYFLKIASSSHPLFLWLKWKIDMVVHWILLGCFAISLLVSLIAAIVLSCDYRFHAIAKHKRNITEMFXVSKIPYFEPLTLFNLFAIVPFIVSLISFFLLVRSLWRHTKQIKLYATGSRDPSTEVHVRAIKTMTSFIFFFFLYFISSILMTFSYLMTKYKLAVEFGEIAAILYPLGHSLILIVLNNKLRQIFVRMLTCRKIACVI</sequence>
<accession>Q646C5</accession>
<name>TA2R8_PANTR</name>
<protein>
    <recommendedName>
        <fullName>Taste receptor type 2 member 8</fullName>
        <shortName>T2R8</shortName>
    </recommendedName>
</protein>
<organism>
    <name type="scientific">Pan troglodytes</name>
    <name type="common">Chimpanzee</name>
    <dbReference type="NCBI Taxonomy" id="9598"/>
    <lineage>
        <taxon>Eukaryota</taxon>
        <taxon>Metazoa</taxon>
        <taxon>Chordata</taxon>
        <taxon>Craniata</taxon>
        <taxon>Vertebrata</taxon>
        <taxon>Euteleostomi</taxon>
        <taxon>Mammalia</taxon>
        <taxon>Eutheria</taxon>
        <taxon>Euarchontoglires</taxon>
        <taxon>Primates</taxon>
        <taxon>Haplorrhini</taxon>
        <taxon>Catarrhini</taxon>
        <taxon>Hominidae</taxon>
        <taxon>Pan</taxon>
    </lineage>
</organism>
<reference key="1">
    <citation type="journal article" date="2005" name="Mol. Biol. Evol.">
        <title>Evolution of bitter taste receptors in humans and apes.</title>
        <authorList>
            <person name="Fischer A."/>
            <person name="Gilad Y."/>
            <person name="Man O."/>
            <person name="Paeaebo S."/>
        </authorList>
    </citation>
    <scope>NUCLEOTIDE SEQUENCE [GENOMIC DNA]</scope>
</reference>